<keyword id="KW-0479">Metal-binding</keyword>
<keyword id="KW-0480">Metal-thiolate cluster</keyword>
<evidence type="ECO:0000305" key="1"/>
<dbReference type="EMBL" id="L27813">
    <property type="protein sequence ID" value="AAA53074.1"/>
    <property type="molecule type" value="mRNA"/>
</dbReference>
<dbReference type="GO" id="GO:0046872">
    <property type="term" value="F:metal ion binding"/>
    <property type="evidence" value="ECO:0007669"/>
    <property type="project" value="UniProtKB-KW"/>
</dbReference>
<dbReference type="InterPro" id="IPR000347">
    <property type="entry name" value="Metalthion_15p"/>
</dbReference>
<dbReference type="PANTHER" id="PTHR33543">
    <property type="entry name" value="METALLOTHIONEIN-LIKE PROTEIN 2A"/>
    <property type="match status" value="1"/>
</dbReference>
<dbReference type="PANTHER" id="PTHR33543:SF33">
    <property type="entry name" value="METALLOTHIONEIN-LIKE PROTEIN 2B"/>
    <property type="match status" value="1"/>
</dbReference>
<dbReference type="Pfam" id="PF01439">
    <property type="entry name" value="Metallothio_2"/>
    <property type="match status" value="1"/>
</dbReference>
<comment type="function">
    <text>Metallothioneins have a high content of cysteine residues that bind various heavy metals.</text>
</comment>
<comment type="developmental stage">
    <text>Highly expressed in young fruit with reduced expression in the later stages of fruit development.</text>
</comment>
<comment type="similarity">
    <text evidence="1">Belongs to the metallothionein superfamily. Type 15 family.</text>
</comment>
<accession>P43390</accession>
<feature type="chain" id="PRO_0000197385" description="Metallothionein-like protein type 2">
    <location>
        <begin position="1"/>
        <end position="78"/>
    </location>
</feature>
<gene>
    <name type="ORF">pKIWI504</name>
</gene>
<reference key="1">
    <citation type="journal article" date="1994" name="Plant Mol. Biol.">
        <title>Cloning and characterization of five cDNAs for genes differentially expressed during fruit development of kiwifruit (Actinidia deliciosa var. deliciosa).</title>
        <authorList>
            <person name="Ledger S.E."/>
            <person name="Gardner R.C."/>
        </authorList>
    </citation>
    <scope>NUCLEOTIDE SEQUENCE [MRNA]</scope>
    <source>
        <strain>cv. Hayward</strain>
        <tissue>Fruit</tissue>
    </source>
</reference>
<protein>
    <recommendedName>
        <fullName>Metallothionein-like protein type 2</fullName>
    </recommendedName>
</protein>
<proteinExistence type="evidence at transcript level"/>
<name>MT2_ACTDE</name>
<sequence>MSCCGGKCGCGSSCSCGSGCGGCGMYPDLSYSEMTTTETLIVGVAPQKTYFEGSEMGVAAENGCKCGSDCKCDPCTCK</sequence>
<organism>
    <name type="scientific">Actinidia deliciosa</name>
    <name type="common">Kiwi</name>
    <dbReference type="NCBI Taxonomy" id="3627"/>
    <lineage>
        <taxon>Eukaryota</taxon>
        <taxon>Viridiplantae</taxon>
        <taxon>Streptophyta</taxon>
        <taxon>Embryophyta</taxon>
        <taxon>Tracheophyta</taxon>
        <taxon>Spermatophyta</taxon>
        <taxon>Magnoliopsida</taxon>
        <taxon>eudicotyledons</taxon>
        <taxon>Gunneridae</taxon>
        <taxon>Pentapetalae</taxon>
        <taxon>asterids</taxon>
        <taxon>Ericales</taxon>
        <taxon>Actinidiaceae</taxon>
        <taxon>Actinidia</taxon>
    </lineage>
</organism>